<evidence type="ECO:0000255" key="1">
    <source>
        <dbReference type="HAMAP-Rule" id="MF_01382"/>
    </source>
</evidence>
<feature type="chain" id="PRO_1000144993" description="Protein translocase subunit SecA">
    <location>
        <begin position="1"/>
        <end position="969"/>
    </location>
</feature>
<feature type="binding site" evidence="1">
    <location>
        <position position="99"/>
    </location>
    <ligand>
        <name>ATP</name>
        <dbReference type="ChEBI" id="CHEBI:30616"/>
    </ligand>
</feature>
<feature type="binding site" evidence="1">
    <location>
        <begin position="117"/>
        <end position="121"/>
    </location>
    <ligand>
        <name>ATP</name>
        <dbReference type="ChEBI" id="CHEBI:30616"/>
    </ligand>
</feature>
<feature type="binding site" evidence="1">
    <location>
        <position position="631"/>
    </location>
    <ligand>
        <name>ATP</name>
        <dbReference type="ChEBI" id="CHEBI:30616"/>
    </ligand>
</feature>
<name>SECA_CHLTB</name>
<sequence>MMDFLKRFFGSSQERILKRFQKLVEEVNACDEKFSSLSDDELREKTPQLKQRYQDGESLDKLLPEAYGVVKNVCRRLAGTPVEVSGYHQQWDMVPYDVQILGAIAMHKGFITEMQTGEGKTLTAVMPLYLNALTGKPVHLVTVNDYLAQRDCEWVGSVLRWLGLTTGVLVSGSPPEKRKAIYQCDVVYGTASEFGFDYLRDNSIATRKEEQVGRGFYFAIIDEIDSVLIDEARTPLIISGPGEKHNPVYFELKDRVAELVYFQREMCNHIAIEARKVLDPFLGTDVLPKDKKVMEAISEACRALWLVSKGMPLNRVLRRVREHPDLRAMIDKWDVFYHAEQNKEECLEKLSSLYIVVDEHNNDFELTDKGMLQWIEKIGGAAEDFVMMDMGHEYALIEEDATLSPADKLNRKIAVSEKDTQRKARAHGLRQLLRAHLLMEKDIDYIVRDDQIVIIDEHTGRPQPGRRFSEGLHQAIEAKEHVTIRKESQTFATVTLQNFFRLYEKLAGMTGTAITESREFKEIYSLYVLQVPTFKPCLRIDHNDAFYMTEREKYQAIVAEIISAHRSGKPILIGTESVEVSEKLSRILRQNRINHTVLNAKNHAQEAEIIAGAGKVGAVTVATNMAGRGTDIKLDEEAVAAGGLYVIGTSRHQSRRIDRQLRGRCARLGDPGAAKFFLSFEDRLMRLFASPKLNTLIRHFRPPEGEAMSDPMFDRLIETAQKRVEGRNYTIRKHTLEYDDVMNKQRQTIYAFRNDVLHAEDLFVVAKEQIEHVALALAFLILKDAHADHCSLPKIEEWLSYSFPVKLDDQEIRRLGDVDAVADYIGDLLIEAFDVKFSAMLAEFTEIIGSAANAQGICNDILRSVIISHIDEEWKVHLVDMDLLRSEVGLRSVGQKDPLIEFKNESFLLFEGLIRDIRIAIVKHLFALELSLTRSDRPDNAIPTVATAFHNHDNFRPMELTIVGEEEES</sequence>
<protein>
    <recommendedName>
        <fullName evidence="1">Protein translocase subunit SecA</fullName>
        <ecNumber evidence="1">7.4.2.8</ecNumber>
    </recommendedName>
</protein>
<reference key="1">
    <citation type="journal article" date="2008" name="Genome Res.">
        <title>Chlamydia trachomatis: genome sequence analysis of lymphogranuloma venereum isolates.</title>
        <authorList>
            <person name="Thomson N.R."/>
            <person name="Holden M.T.G."/>
            <person name="Carder C."/>
            <person name="Lennard N."/>
            <person name="Lockey S.J."/>
            <person name="Marsh P."/>
            <person name="Skipp P."/>
            <person name="O'Connor C.D."/>
            <person name="Goodhead I."/>
            <person name="Norbertzcak H."/>
            <person name="Harris B."/>
            <person name="Ormond D."/>
            <person name="Rance R."/>
            <person name="Quail M.A."/>
            <person name="Parkhill J."/>
            <person name="Stephens R.S."/>
            <person name="Clarke I.N."/>
        </authorList>
    </citation>
    <scope>NUCLEOTIDE SEQUENCE [LARGE SCALE GENOMIC DNA]</scope>
    <source>
        <strain>UCH-1/proctitis</strain>
    </source>
</reference>
<proteinExistence type="inferred from homology"/>
<dbReference type="EC" id="7.4.2.8" evidence="1"/>
<dbReference type="EMBL" id="AM884177">
    <property type="protein sequence ID" value="CAP06468.1"/>
    <property type="molecule type" value="Genomic_DNA"/>
</dbReference>
<dbReference type="RefSeq" id="WP_009873306.1">
    <property type="nucleotide sequence ID" value="NC_010280.2"/>
</dbReference>
<dbReference type="SMR" id="B0BAF6"/>
<dbReference type="KEGG" id="ctl:CTLon_0070"/>
<dbReference type="HOGENOM" id="CLU_005314_0_0_0"/>
<dbReference type="Proteomes" id="UP001154401">
    <property type="component" value="Chromosome"/>
</dbReference>
<dbReference type="GO" id="GO:0031522">
    <property type="term" value="C:cell envelope Sec protein transport complex"/>
    <property type="evidence" value="ECO:0007669"/>
    <property type="project" value="TreeGrafter"/>
</dbReference>
<dbReference type="GO" id="GO:0005829">
    <property type="term" value="C:cytosol"/>
    <property type="evidence" value="ECO:0007669"/>
    <property type="project" value="TreeGrafter"/>
</dbReference>
<dbReference type="GO" id="GO:0005886">
    <property type="term" value="C:plasma membrane"/>
    <property type="evidence" value="ECO:0007669"/>
    <property type="project" value="UniProtKB-SubCell"/>
</dbReference>
<dbReference type="GO" id="GO:0005524">
    <property type="term" value="F:ATP binding"/>
    <property type="evidence" value="ECO:0007669"/>
    <property type="project" value="UniProtKB-UniRule"/>
</dbReference>
<dbReference type="GO" id="GO:0008564">
    <property type="term" value="F:protein-exporting ATPase activity"/>
    <property type="evidence" value="ECO:0007669"/>
    <property type="project" value="UniProtKB-EC"/>
</dbReference>
<dbReference type="GO" id="GO:0065002">
    <property type="term" value="P:intracellular protein transmembrane transport"/>
    <property type="evidence" value="ECO:0007669"/>
    <property type="project" value="UniProtKB-UniRule"/>
</dbReference>
<dbReference type="GO" id="GO:0017038">
    <property type="term" value="P:protein import"/>
    <property type="evidence" value="ECO:0007669"/>
    <property type="project" value="InterPro"/>
</dbReference>
<dbReference type="GO" id="GO:0006605">
    <property type="term" value="P:protein targeting"/>
    <property type="evidence" value="ECO:0007669"/>
    <property type="project" value="UniProtKB-UniRule"/>
</dbReference>
<dbReference type="GO" id="GO:0043952">
    <property type="term" value="P:protein transport by the Sec complex"/>
    <property type="evidence" value="ECO:0007669"/>
    <property type="project" value="TreeGrafter"/>
</dbReference>
<dbReference type="CDD" id="cd17928">
    <property type="entry name" value="DEXDc_SecA"/>
    <property type="match status" value="1"/>
</dbReference>
<dbReference type="CDD" id="cd18803">
    <property type="entry name" value="SF2_C_secA"/>
    <property type="match status" value="1"/>
</dbReference>
<dbReference type="FunFam" id="3.40.50.300:FF:000694">
    <property type="entry name" value="Preprotein translocase subunit SecA"/>
    <property type="match status" value="1"/>
</dbReference>
<dbReference type="FunFam" id="1.10.3060.10:FF:000011">
    <property type="entry name" value="Protein translocase subunit SecA"/>
    <property type="match status" value="1"/>
</dbReference>
<dbReference type="FunFam" id="3.40.50.300:FF:000787">
    <property type="entry name" value="Protein translocase subunit SecA"/>
    <property type="match status" value="1"/>
</dbReference>
<dbReference type="Gene3D" id="1.10.3060.10">
    <property type="entry name" value="Helical scaffold and wing domains of SecA"/>
    <property type="match status" value="1"/>
</dbReference>
<dbReference type="Gene3D" id="3.40.50.300">
    <property type="entry name" value="P-loop containing nucleotide triphosphate hydrolases"/>
    <property type="match status" value="2"/>
</dbReference>
<dbReference type="Gene3D" id="3.90.1440.10">
    <property type="entry name" value="SecA, preprotein cross-linking domain"/>
    <property type="match status" value="1"/>
</dbReference>
<dbReference type="HAMAP" id="MF_01382">
    <property type="entry name" value="SecA"/>
    <property type="match status" value="1"/>
</dbReference>
<dbReference type="InterPro" id="IPR014001">
    <property type="entry name" value="Helicase_ATP-bd"/>
</dbReference>
<dbReference type="InterPro" id="IPR001650">
    <property type="entry name" value="Helicase_C-like"/>
</dbReference>
<dbReference type="InterPro" id="IPR027417">
    <property type="entry name" value="P-loop_NTPase"/>
</dbReference>
<dbReference type="InterPro" id="IPR000185">
    <property type="entry name" value="SecA"/>
</dbReference>
<dbReference type="InterPro" id="IPR020937">
    <property type="entry name" value="SecA_CS"/>
</dbReference>
<dbReference type="InterPro" id="IPR011115">
    <property type="entry name" value="SecA_DEAD"/>
</dbReference>
<dbReference type="InterPro" id="IPR014018">
    <property type="entry name" value="SecA_motor_DEAD"/>
</dbReference>
<dbReference type="InterPro" id="IPR011130">
    <property type="entry name" value="SecA_preprotein_X-link_dom"/>
</dbReference>
<dbReference type="InterPro" id="IPR044722">
    <property type="entry name" value="SecA_SF2_C"/>
</dbReference>
<dbReference type="InterPro" id="IPR011116">
    <property type="entry name" value="SecA_Wing/Scaffold"/>
</dbReference>
<dbReference type="InterPro" id="IPR036266">
    <property type="entry name" value="SecA_Wing/Scaffold_sf"/>
</dbReference>
<dbReference type="InterPro" id="IPR036670">
    <property type="entry name" value="SecA_X-link_sf"/>
</dbReference>
<dbReference type="NCBIfam" id="TIGR00963">
    <property type="entry name" value="secA"/>
    <property type="match status" value="1"/>
</dbReference>
<dbReference type="PANTHER" id="PTHR30612:SF0">
    <property type="entry name" value="CHLOROPLAST PROTEIN-TRANSPORTING ATPASE"/>
    <property type="match status" value="1"/>
</dbReference>
<dbReference type="PANTHER" id="PTHR30612">
    <property type="entry name" value="SECA INNER MEMBRANE COMPONENT OF SEC PROTEIN SECRETION SYSTEM"/>
    <property type="match status" value="1"/>
</dbReference>
<dbReference type="Pfam" id="PF21090">
    <property type="entry name" value="P-loop_SecA"/>
    <property type="match status" value="1"/>
</dbReference>
<dbReference type="Pfam" id="PF07517">
    <property type="entry name" value="SecA_DEAD"/>
    <property type="match status" value="1"/>
</dbReference>
<dbReference type="Pfam" id="PF01043">
    <property type="entry name" value="SecA_PP_bind"/>
    <property type="match status" value="1"/>
</dbReference>
<dbReference type="Pfam" id="PF07516">
    <property type="entry name" value="SecA_SW"/>
    <property type="match status" value="1"/>
</dbReference>
<dbReference type="PRINTS" id="PR00906">
    <property type="entry name" value="SECA"/>
</dbReference>
<dbReference type="SMART" id="SM00957">
    <property type="entry name" value="SecA_DEAD"/>
    <property type="match status" value="1"/>
</dbReference>
<dbReference type="SMART" id="SM00958">
    <property type="entry name" value="SecA_PP_bind"/>
    <property type="match status" value="1"/>
</dbReference>
<dbReference type="SUPFAM" id="SSF81886">
    <property type="entry name" value="Helical scaffold and wing domains of SecA"/>
    <property type="match status" value="1"/>
</dbReference>
<dbReference type="SUPFAM" id="SSF52540">
    <property type="entry name" value="P-loop containing nucleoside triphosphate hydrolases"/>
    <property type="match status" value="2"/>
</dbReference>
<dbReference type="SUPFAM" id="SSF81767">
    <property type="entry name" value="Pre-protein crosslinking domain of SecA"/>
    <property type="match status" value="1"/>
</dbReference>
<dbReference type="PROSITE" id="PS01312">
    <property type="entry name" value="SECA"/>
    <property type="match status" value="1"/>
</dbReference>
<dbReference type="PROSITE" id="PS51196">
    <property type="entry name" value="SECA_MOTOR_DEAD"/>
    <property type="match status" value="1"/>
</dbReference>
<gene>
    <name evidence="1" type="primary">secA</name>
    <name type="ordered locus">CTLon_0070</name>
</gene>
<comment type="function">
    <text evidence="1">Part of the Sec protein translocase complex. Interacts with the SecYEG preprotein conducting channel. Has a central role in coupling the hydrolysis of ATP to the transfer of proteins into and across the cell membrane, serving as an ATP-driven molecular motor driving the stepwise translocation of polypeptide chains across the membrane.</text>
</comment>
<comment type="catalytic activity">
    <reaction evidence="1">
        <text>ATP + H2O + cellular proteinSide 1 = ADP + phosphate + cellular proteinSide 2.</text>
        <dbReference type="EC" id="7.4.2.8"/>
    </reaction>
</comment>
<comment type="subunit">
    <text evidence="1">Monomer and homodimer. Part of the essential Sec protein translocation apparatus which comprises SecA, SecYEG and auxiliary proteins SecDF. Other proteins may also be involved.</text>
</comment>
<comment type="subcellular location">
    <subcellularLocation>
        <location evidence="1">Cell inner membrane</location>
        <topology evidence="1">Peripheral membrane protein</topology>
        <orientation evidence="1">Cytoplasmic side</orientation>
    </subcellularLocation>
    <subcellularLocation>
        <location evidence="1">Cytoplasm</location>
    </subcellularLocation>
    <text evidence="1">Distribution is 50-50.</text>
</comment>
<comment type="similarity">
    <text evidence="1">Belongs to the SecA family.</text>
</comment>
<accession>B0BAF6</accession>
<keyword id="KW-0067">ATP-binding</keyword>
<keyword id="KW-0997">Cell inner membrane</keyword>
<keyword id="KW-1003">Cell membrane</keyword>
<keyword id="KW-0963">Cytoplasm</keyword>
<keyword id="KW-0472">Membrane</keyword>
<keyword id="KW-0547">Nucleotide-binding</keyword>
<keyword id="KW-0653">Protein transport</keyword>
<keyword id="KW-1278">Translocase</keyword>
<keyword id="KW-0811">Translocation</keyword>
<keyword id="KW-0813">Transport</keyword>
<organism>
    <name type="scientific">Chlamydia trachomatis serovar L2b (strain UCH-1/proctitis)</name>
    <dbReference type="NCBI Taxonomy" id="471473"/>
    <lineage>
        <taxon>Bacteria</taxon>
        <taxon>Pseudomonadati</taxon>
        <taxon>Chlamydiota</taxon>
        <taxon>Chlamydiia</taxon>
        <taxon>Chlamydiales</taxon>
        <taxon>Chlamydiaceae</taxon>
        <taxon>Chlamydia/Chlamydophila group</taxon>
        <taxon>Chlamydia</taxon>
    </lineage>
</organism>